<comment type="function">
    <text evidence="1">Catalyzes the pyruvoyl-dependent decarboxylation of aspartate to produce beta-alanine.</text>
</comment>
<comment type="catalytic activity">
    <reaction evidence="1">
        <text>L-aspartate + H(+) = beta-alanine + CO2</text>
        <dbReference type="Rhea" id="RHEA:19497"/>
        <dbReference type="ChEBI" id="CHEBI:15378"/>
        <dbReference type="ChEBI" id="CHEBI:16526"/>
        <dbReference type="ChEBI" id="CHEBI:29991"/>
        <dbReference type="ChEBI" id="CHEBI:57966"/>
        <dbReference type="EC" id="4.1.1.11"/>
    </reaction>
</comment>
<comment type="cofactor">
    <cofactor evidence="1">
        <name>pyruvate</name>
        <dbReference type="ChEBI" id="CHEBI:15361"/>
    </cofactor>
    <text evidence="1">Binds 1 pyruvoyl group covalently per subunit.</text>
</comment>
<comment type="pathway">
    <text evidence="1">Cofactor biosynthesis; (R)-pantothenate biosynthesis; beta-alanine from L-aspartate: step 1/1.</text>
</comment>
<comment type="subunit">
    <text evidence="1">Heterooctamer of four alpha and four beta subunits.</text>
</comment>
<comment type="subcellular location">
    <subcellularLocation>
        <location evidence="1">Cytoplasm</location>
    </subcellularLocation>
</comment>
<comment type="PTM">
    <text evidence="1">Is synthesized initially as an inactive proenzyme, which is activated by self-cleavage at a specific serine bond to produce a beta-subunit with a hydroxyl group at its C-terminus and an alpha-subunit with a pyruvoyl group at its N-terminus.</text>
</comment>
<comment type="similarity">
    <text evidence="1">Belongs to the PanD family.</text>
</comment>
<reference key="1">
    <citation type="journal article" date="2007" name="Science">
        <title>The Calyptogena magnifica chemoautotrophic symbiont genome.</title>
        <authorList>
            <person name="Newton I.L.G."/>
            <person name="Woyke T."/>
            <person name="Auchtung T.A."/>
            <person name="Dilly G.F."/>
            <person name="Dutton R.J."/>
            <person name="Fisher M.C."/>
            <person name="Fontanez K.M."/>
            <person name="Lau E."/>
            <person name="Stewart F.J."/>
            <person name="Richardson P.M."/>
            <person name="Barry K.W."/>
            <person name="Saunders E."/>
            <person name="Detter J.C."/>
            <person name="Wu D."/>
            <person name="Eisen J.A."/>
            <person name="Cavanaugh C.M."/>
        </authorList>
    </citation>
    <scope>NUCLEOTIDE SEQUENCE [LARGE SCALE GENOMIC DNA]</scope>
</reference>
<gene>
    <name evidence="1" type="primary">panD</name>
    <name type="ordered locus">Rmag_0846</name>
</gene>
<sequence length="119" mass="13083">MKRTFLSAKLHKVITTAVELDYEGSCEIDGVLLDAADIGAFEQIQIYNINNGNRFTTYTIRGKDNSGVISVNGAAAHKVNVGDMLIIAAYGVYSEKELESYTPRLCYVNDQNILTKISS</sequence>
<accession>A1AXA6</accession>
<evidence type="ECO:0000255" key="1">
    <source>
        <dbReference type="HAMAP-Rule" id="MF_00446"/>
    </source>
</evidence>
<name>PAND_RUTMC</name>
<keyword id="KW-0068">Autocatalytic cleavage</keyword>
<keyword id="KW-0963">Cytoplasm</keyword>
<keyword id="KW-0210">Decarboxylase</keyword>
<keyword id="KW-0456">Lyase</keyword>
<keyword id="KW-0566">Pantothenate biosynthesis</keyword>
<keyword id="KW-0670">Pyruvate</keyword>
<keyword id="KW-0704">Schiff base</keyword>
<keyword id="KW-0865">Zymogen</keyword>
<protein>
    <recommendedName>
        <fullName evidence="1">Aspartate 1-decarboxylase</fullName>
        <ecNumber evidence="1">4.1.1.11</ecNumber>
    </recommendedName>
    <alternativeName>
        <fullName evidence="1">Aspartate alpha-decarboxylase</fullName>
    </alternativeName>
    <component>
        <recommendedName>
            <fullName evidence="1">Aspartate 1-decarboxylase beta chain</fullName>
        </recommendedName>
    </component>
    <component>
        <recommendedName>
            <fullName evidence="1">Aspartate 1-decarboxylase alpha chain</fullName>
        </recommendedName>
    </component>
</protein>
<organism>
    <name type="scientific">Ruthia magnifica subsp. Calyptogena magnifica</name>
    <dbReference type="NCBI Taxonomy" id="413404"/>
    <lineage>
        <taxon>Bacteria</taxon>
        <taxon>Pseudomonadati</taxon>
        <taxon>Pseudomonadota</taxon>
        <taxon>Gammaproteobacteria</taxon>
        <taxon>Candidatus Pseudothioglobaceae</taxon>
        <taxon>Candidatus Ruthturnera</taxon>
    </lineage>
</organism>
<dbReference type="EC" id="4.1.1.11" evidence="1"/>
<dbReference type="EMBL" id="CP000488">
    <property type="protein sequence ID" value="ABL02563.1"/>
    <property type="molecule type" value="Genomic_DNA"/>
</dbReference>
<dbReference type="RefSeq" id="WP_011738188.1">
    <property type="nucleotide sequence ID" value="NC_008610.1"/>
</dbReference>
<dbReference type="SMR" id="A1AXA6"/>
<dbReference type="STRING" id="413404.Rmag_0846"/>
<dbReference type="KEGG" id="rma:Rmag_0846"/>
<dbReference type="eggNOG" id="COG0853">
    <property type="taxonomic scope" value="Bacteria"/>
</dbReference>
<dbReference type="HOGENOM" id="CLU_115305_2_1_6"/>
<dbReference type="OrthoDB" id="9803983at2"/>
<dbReference type="UniPathway" id="UPA00028">
    <property type="reaction ID" value="UER00002"/>
</dbReference>
<dbReference type="Proteomes" id="UP000002587">
    <property type="component" value="Chromosome"/>
</dbReference>
<dbReference type="GO" id="GO:0005829">
    <property type="term" value="C:cytosol"/>
    <property type="evidence" value="ECO:0007669"/>
    <property type="project" value="TreeGrafter"/>
</dbReference>
<dbReference type="GO" id="GO:0004068">
    <property type="term" value="F:aspartate 1-decarboxylase activity"/>
    <property type="evidence" value="ECO:0007669"/>
    <property type="project" value="UniProtKB-UniRule"/>
</dbReference>
<dbReference type="GO" id="GO:0006523">
    <property type="term" value="P:alanine biosynthetic process"/>
    <property type="evidence" value="ECO:0007669"/>
    <property type="project" value="InterPro"/>
</dbReference>
<dbReference type="GO" id="GO:0015940">
    <property type="term" value="P:pantothenate biosynthetic process"/>
    <property type="evidence" value="ECO:0007669"/>
    <property type="project" value="UniProtKB-UniRule"/>
</dbReference>
<dbReference type="CDD" id="cd06919">
    <property type="entry name" value="Asp_decarbox"/>
    <property type="match status" value="1"/>
</dbReference>
<dbReference type="Gene3D" id="2.40.40.20">
    <property type="match status" value="1"/>
</dbReference>
<dbReference type="HAMAP" id="MF_00446">
    <property type="entry name" value="PanD"/>
    <property type="match status" value="1"/>
</dbReference>
<dbReference type="InterPro" id="IPR009010">
    <property type="entry name" value="Asp_de-COase-like_dom_sf"/>
</dbReference>
<dbReference type="InterPro" id="IPR003190">
    <property type="entry name" value="Asp_decarbox"/>
</dbReference>
<dbReference type="NCBIfam" id="TIGR00223">
    <property type="entry name" value="panD"/>
    <property type="match status" value="1"/>
</dbReference>
<dbReference type="PANTHER" id="PTHR21012">
    <property type="entry name" value="ASPARTATE 1-DECARBOXYLASE"/>
    <property type="match status" value="1"/>
</dbReference>
<dbReference type="PANTHER" id="PTHR21012:SF0">
    <property type="entry name" value="ASPARTATE 1-DECARBOXYLASE"/>
    <property type="match status" value="1"/>
</dbReference>
<dbReference type="Pfam" id="PF02261">
    <property type="entry name" value="Asp_decarbox"/>
    <property type="match status" value="1"/>
</dbReference>
<dbReference type="PIRSF" id="PIRSF006246">
    <property type="entry name" value="Asp_decarbox"/>
    <property type="match status" value="1"/>
</dbReference>
<dbReference type="SUPFAM" id="SSF50692">
    <property type="entry name" value="ADC-like"/>
    <property type="match status" value="1"/>
</dbReference>
<feature type="chain" id="PRO_0000307063" description="Aspartate 1-decarboxylase beta chain" evidence="1">
    <location>
        <begin position="1"/>
        <end position="24"/>
    </location>
</feature>
<feature type="chain" id="PRO_0000307064" description="Aspartate 1-decarboxylase alpha chain" evidence="1">
    <location>
        <begin position="25"/>
        <end position="119"/>
    </location>
</feature>
<feature type="active site" description="Schiff-base intermediate with substrate; via pyruvic acid" evidence="1">
    <location>
        <position position="25"/>
    </location>
</feature>
<feature type="active site" description="Proton donor" evidence="1">
    <location>
        <position position="58"/>
    </location>
</feature>
<feature type="binding site" evidence="1">
    <location>
        <position position="57"/>
    </location>
    <ligand>
        <name>substrate</name>
    </ligand>
</feature>
<feature type="binding site" evidence="1">
    <location>
        <begin position="73"/>
        <end position="75"/>
    </location>
    <ligand>
        <name>substrate</name>
    </ligand>
</feature>
<feature type="modified residue" description="Pyruvic acid (Ser)" evidence="1">
    <location>
        <position position="25"/>
    </location>
</feature>
<proteinExistence type="inferred from homology"/>